<dbReference type="EC" id="3.1.-.-" evidence="1"/>
<dbReference type="EMBL" id="CU207366">
    <property type="protein sequence ID" value="CAL67239.1"/>
    <property type="molecule type" value="Genomic_DNA"/>
</dbReference>
<dbReference type="RefSeq" id="WP_011710142.1">
    <property type="nucleotide sequence ID" value="NC_008571.1"/>
</dbReference>
<dbReference type="SMR" id="A0M3P4"/>
<dbReference type="STRING" id="411154.GFO_2274"/>
<dbReference type="KEGG" id="gfo:GFO_2274"/>
<dbReference type="eggNOG" id="COG0816">
    <property type="taxonomic scope" value="Bacteria"/>
</dbReference>
<dbReference type="HOGENOM" id="CLU_098240_2_1_10"/>
<dbReference type="OrthoDB" id="9796140at2"/>
<dbReference type="Proteomes" id="UP000000755">
    <property type="component" value="Chromosome"/>
</dbReference>
<dbReference type="GO" id="GO:0005829">
    <property type="term" value="C:cytosol"/>
    <property type="evidence" value="ECO:0007669"/>
    <property type="project" value="TreeGrafter"/>
</dbReference>
<dbReference type="GO" id="GO:0004518">
    <property type="term" value="F:nuclease activity"/>
    <property type="evidence" value="ECO:0007669"/>
    <property type="project" value="UniProtKB-KW"/>
</dbReference>
<dbReference type="GO" id="GO:0000967">
    <property type="term" value="P:rRNA 5'-end processing"/>
    <property type="evidence" value="ECO:0007669"/>
    <property type="project" value="UniProtKB-UniRule"/>
</dbReference>
<dbReference type="CDD" id="cd16964">
    <property type="entry name" value="YqgF"/>
    <property type="match status" value="1"/>
</dbReference>
<dbReference type="Gene3D" id="3.30.420.140">
    <property type="entry name" value="YqgF/RNase H-like domain"/>
    <property type="match status" value="1"/>
</dbReference>
<dbReference type="HAMAP" id="MF_00651">
    <property type="entry name" value="Nuclease_YqgF"/>
    <property type="match status" value="1"/>
</dbReference>
<dbReference type="InterPro" id="IPR012337">
    <property type="entry name" value="RNaseH-like_sf"/>
</dbReference>
<dbReference type="InterPro" id="IPR005227">
    <property type="entry name" value="YqgF"/>
</dbReference>
<dbReference type="InterPro" id="IPR006641">
    <property type="entry name" value="YqgF/RNaseH-like_dom"/>
</dbReference>
<dbReference type="InterPro" id="IPR037027">
    <property type="entry name" value="YqgF/RNaseH-like_dom_sf"/>
</dbReference>
<dbReference type="NCBIfam" id="TIGR00250">
    <property type="entry name" value="RNAse_H_YqgF"/>
    <property type="match status" value="1"/>
</dbReference>
<dbReference type="PANTHER" id="PTHR33317">
    <property type="entry name" value="POLYNUCLEOTIDYL TRANSFERASE, RIBONUCLEASE H-LIKE SUPERFAMILY PROTEIN"/>
    <property type="match status" value="1"/>
</dbReference>
<dbReference type="PANTHER" id="PTHR33317:SF4">
    <property type="entry name" value="POLYNUCLEOTIDYL TRANSFERASE, RIBONUCLEASE H-LIKE SUPERFAMILY PROTEIN"/>
    <property type="match status" value="1"/>
</dbReference>
<dbReference type="Pfam" id="PF03652">
    <property type="entry name" value="RuvX"/>
    <property type="match status" value="1"/>
</dbReference>
<dbReference type="SMART" id="SM00732">
    <property type="entry name" value="YqgFc"/>
    <property type="match status" value="1"/>
</dbReference>
<dbReference type="SUPFAM" id="SSF53098">
    <property type="entry name" value="Ribonuclease H-like"/>
    <property type="match status" value="1"/>
</dbReference>
<name>YQGF_CHRFK</name>
<reference key="1">
    <citation type="journal article" date="2006" name="Environ. Microbiol.">
        <title>Whole genome analysis of the marine Bacteroidetes'Gramella forsetii' reveals adaptations to degradation of polymeric organic matter.</title>
        <authorList>
            <person name="Bauer M."/>
            <person name="Kube M."/>
            <person name="Teeling H."/>
            <person name="Richter M."/>
            <person name="Lombardot T."/>
            <person name="Allers E."/>
            <person name="Wuerdemann C.A."/>
            <person name="Quast C."/>
            <person name="Kuhl H."/>
            <person name="Knaust F."/>
            <person name="Woebken D."/>
            <person name="Bischof K."/>
            <person name="Mussmann M."/>
            <person name="Choudhuri J.V."/>
            <person name="Meyer F."/>
            <person name="Reinhardt R."/>
            <person name="Amann R.I."/>
            <person name="Gloeckner F.O."/>
        </authorList>
    </citation>
    <scope>NUCLEOTIDE SEQUENCE [LARGE SCALE GENOMIC DNA]</scope>
    <source>
        <strain>DSM 17595 / CGMCC 1.15422 / KT0803</strain>
    </source>
</reference>
<accession>A0M3P4</accession>
<feature type="chain" id="PRO_1000061521" description="Putative pre-16S rRNA nuclease">
    <location>
        <begin position="1"/>
        <end position="135"/>
    </location>
</feature>
<comment type="function">
    <text evidence="1">Could be a nuclease involved in processing of the 5'-end of pre-16S rRNA.</text>
</comment>
<comment type="subcellular location">
    <subcellularLocation>
        <location evidence="1">Cytoplasm</location>
    </subcellularLocation>
</comment>
<comment type="similarity">
    <text evidence="1">Belongs to the YqgF nuclease family.</text>
</comment>
<sequence>MARILALDYGTKRTGVAVTDELKMIASGLTTVQTPELIKFLEDYFKNEKVERVLVGEPKRMDDTPSQSEVHIQEFLKEFVKKFPEMPMERVDERFTSKMAVQSMIDGGLKKKKRRDKALVDEISATIILQTWLYE</sequence>
<organism>
    <name type="scientific">Christiangramia forsetii (strain DSM 17595 / CGMCC 1.15422 / KT0803)</name>
    <name type="common">Gramella forsetii</name>
    <dbReference type="NCBI Taxonomy" id="411154"/>
    <lineage>
        <taxon>Bacteria</taxon>
        <taxon>Pseudomonadati</taxon>
        <taxon>Bacteroidota</taxon>
        <taxon>Flavobacteriia</taxon>
        <taxon>Flavobacteriales</taxon>
        <taxon>Flavobacteriaceae</taxon>
        <taxon>Christiangramia</taxon>
    </lineage>
</organism>
<evidence type="ECO:0000255" key="1">
    <source>
        <dbReference type="HAMAP-Rule" id="MF_00651"/>
    </source>
</evidence>
<protein>
    <recommendedName>
        <fullName evidence="1">Putative pre-16S rRNA nuclease</fullName>
        <ecNumber evidence="1">3.1.-.-</ecNumber>
    </recommendedName>
</protein>
<keyword id="KW-0963">Cytoplasm</keyword>
<keyword id="KW-0378">Hydrolase</keyword>
<keyword id="KW-0540">Nuclease</keyword>
<keyword id="KW-0690">Ribosome biogenesis</keyword>
<proteinExistence type="inferred from homology"/>
<gene>
    <name type="ordered locus">GFO_2274</name>
</gene>